<accession>Q3SUR0</accession>
<name>ARLY_NITWN</name>
<sequence length="465" mass="50466">MSNKMWGGRFGEGPDAIMEEINVSIDVDRHLYAQDIAASKVHAEMLAAQGIIAANDAKKIGKGLDTILSEIRDDSFDFKRALEDIHMNVESRLGELIGPSAGRLHTARSRNDQVATDFRLYVRDIIDETDNALATFQHTLATRALEFAGTVMPGFTHLQTAQPVTFGHHLLAYVEMAARDRGRFADARRRLNESPLGAAALAGTSFPIDRHATAKGLGFDRPMANSLDAVSDRDFVLETLSAAAIASTHLSRFAEEMVIWTSPLVGLVRLSDKFTTGSSIMPQKRNPDAAELVRAKTGRVVGALTGLLVVMKGLPLAYQKDMQEDKQGAMEAFSALSLAIRAMTGMVADLVPDEARMKAAAGDGYATATDLADWLVRTLKMPFRDAHHVTGRIVAAASKQGVALHELPLSAMQAVEPRITRDALAVLSVEASVKSRTSYGGTAPKNVRAQAKAWLRRLEKKRTPD</sequence>
<reference key="1">
    <citation type="journal article" date="2006" name="Appl. Environ. Microbiol.">
        <title>Genome sequence of the chemolithoautotrophic nitrite-oxidizing bacterium Nitrobacter winogradskyi Nb-255.</title>
        <authorList>
            <person name="Starkenburg S.R."/>
            <person name="Chain P.S.G."/>
            <person name="Sayavedra-Soto L.A."/>
            <person name="Hauser L."/>
            <person name="Land M.L."/>
            <person name="Larimer F.W."/>
            <person name="Malfatti S.A."/>
            <person name="Klotz M.G."/>
            <person name="Bottomley P.J."/>
            <person name="Arp D.J."/>
            <person name="Hickey W.J."/>
        </authorList>
    </citation>
    <scope>NUCLEOTIDE SEQUENCE [LARGE SCALE GENOMIC DNA]</scope>
    <source>
        <strain>ATCC 25391 / DSM 10237 / CIP 104748 / NCIMB 11846 / Nb-255</strain>
    </source>
</reference>
<protein>
    <recommendedName>
        <fullName evidence="1">Argininosuccinate lyase</fullName>
        <shortName evidence="1">ASAL</shortName>
        <ecNumber evidence="1">4.3.2.1</ecNumber>
    </recommendedName>
    <alternativeName>
        <fullName evidence="1">Arginosuccinase</fullName>
    </alternativeName>
</protein>
<keyword id="KW-0028">Amino-acid biosynthesis</keyword>
<keyword id="KW-0055">Arginine biosynthesis</keyword>
<keyword id="KW-0963">Cytoplasm</keyword>
<keyword id="KW-0456">Lyase</keyword>
<keyword id="KW-1185">Reference proteome</keyword>
<gene>
    <name evidence="1" type="primary">argH</name>
    <name type="ordered locus">Nwi_0715</name>
</gene>
<organism>
    <name type="scientific">Nitrobacter winogradskyi (strain ATCC 25391 / DSM 10237 / CIP 104748 / NCIMB 11846 / Nb-255)</name>
    <dbReference type="NCBI Taxonomy" id="323098"/>
    <lineage>
        <taxon>Bacteria</taxon>
        <taxon>Pseudomonadati</taxon>
        <taxon>Pseudomonadota</taxon>
        <taxon>Alphaproteobacteria</taxon>
        <taxon>Hyphomicrobiales</taxon>
        <taxon>Nitrobacteraceae</taxon>
        <taxon>Nitrobacter</taxon>
    </lineage>
</organism>
<evidence type="ECO:0000255" key="1">
    <source>
        <dbReference type="HAMAP-Rule" id="MF_00006"/>
    </source>
</evidence>
<dbReference type="EC" id="4.3.2.1" evidence="1"/>
<dbReference type="EMBL" id="CP000115">
    <property type="protein sequence ID" value="ABA03981.1"/>
    <property type="molecule type" value="Genomic_DNA"/>
</dbReference>
<dbReference type="RefSeq" id="WP_011314035.1">
    <property type="nucleotide sequence ID" value="NC_007406.1"/>
</dbReference>
<dbReference type="SMR" id="Q3SUR0"/>
<dbReference type="STRING" id="323098.Nwi_0715"/>
<dbReference type="KEGG" id="nwi:Nwi_0715"/>
<dbReference type="eggNOG" id="COG0165">
    <property type="taxonomic scope" value="Bacteria"/>
</dbReference>
<dbReference type="HOGENOM" id="CLU_027272_2_3_5"/>
<dbReference type="OrthoDB" id="9769623at2"/>
<dbReference type="UniPathway" id="UPA00068">
    <property type="reaction ID" value="UER00114"/>
</dbReference>
<dbReference type="Proteomes" id="UP000002531">
    <property type="component" value="Chromosome"/>
</dbReference>
<dbReference type="GO" id="GO:0005829">
    <property type="term" value="C:cytosol"/>
    <property type="evidence" value="ECO:0007669"/>
    <property type="project" value="TreeGrafter"/>
</dbReference>
<dbReference type="GO" id="GO:0004056">
    <property type="term" value="F:argininosuccinate lyase activity"/>
    <property type="evidence" value="ECO:0007669"/>
    <property type="project" value="UniProtKB-UniRule"/>
</dbReference>
<dbReference type="GO" id="GO:0042450">
    <property type="term" value="P:arginine biosynthetic process via ornithine"/>
    <property type="evidence" value="ECO:0007669"/>
    <property type="project" value="InterPro"/>
</dbReference>
<dbReference type="GO" id="GO:0006526">
    <property type="term" value="P:L-arginine biosynthetic process"/>
    <property type="evidence" value="ECO:0007669"/>
    <property type="project" value="UniProtKB-UniRule"/>
</dbReference>
<dbReference type="CDD" id="cd01359">
    <property type="entry name" value="Argininosuccinate_lyase"/>
    <property type="match status" value="1"/>
</dbReference>
<dbReference type="FunFam" id="1.10.275.10:FF:000002">
    <property type="entry name" value="Argininosuccinate lyase"/>
    <property type="match status" value="1"/>
</dbReference>
<dbReference type="FunFam" id="1.10.40.30:FF:000001">
    <property type="entry name" value="Argininosuccinate lyase"/>
    <property type="match status" value="1"/>
</dbReference>
<dbReference type="FunFam" id="1.20.200.10:FF:000015">
    <property type="entry name" value="argininosuccinate lyase isoform X2"/>
    <property type="match status" value="1"/>
</dbReference>
<dbReference type="Gene3D" id="1.10.40.30">
    <property type="entry name" value="Fumarase/aspartase (C-terminal domain)"/>
    <property type="match status" value="1"/>
</dbReference>
<dbReference type="Gene3D" id="1.20.200.10">
    <property type="entry name" value="Fumarase/aspartase (Central domain)"/>
    <property type="match status" value="1"/>
</dbReference>
<dbReference type="Gene3D" id="1.10.275.10">
    <property type="entry name" value="Fumarase/aspartase (N-terminal domain)"/>
    <property type="match status" value="1"/>
</dbReference>
<dbReference type="HAMAP" id="MF_00006">
    <property type="entry name" value="Arg_succ_lyase"/>
    <property type="match status" value="1"/>
</dbReference>
<dbReference type="InterPro" id="IPR029419">
    <property type="entry name" value="Arg_succ_lyase_C"/>
</dbReference>
<dbReference type="InterPro" id="IPR009049">
    <property type="entry name" value="Argininosuccinate_lyase"/>
</dbReference>
<dbReference type="InterPro" id="IPR024083">
    <property type="entry name" value="Fumarase/histidase_N"/>
</dbReference>
<dbReference type="InterPro" id="IPR020557">
    <property type="entry name" value="Fumarate_lyase_CS"/>
</dbReference>
<dbReference type="InterPro" id="IPR000362">
    <property type="entry name" value="Fumarate_lyase_fam"/>
</dbReference>
<dbReference type="InterPro" id="IPR022761">
    <property type="entry name" value="Fumarate_lyase_N"/>
</dbReference>
<dbReference type="InterPro" id="IPR008948">
    <property type="entry name" value="L-Aspartase-like"/>
</dbReference>
<dbReference type="NCBIfam" id="TIGR00838">
    <property type="entry name" value="argH"/>
    <property type="match status" value="1"/>
</dbReference>
<dbReference type="PANTHER" id="PTHR43814">
    <property type="entry name" value="ARGININOSUCCINATE LYASE"/>
    <property type="match status" value="1"/>
</dbReference>
<dbReference type="PANTHER" id="PTHR43814:SF1">
    <property type="entry name" value="ARGININOSUCCINATE LYASE"/>
    <property type="match status" value="1"/>
</dbReference>
<dbReference type="Pfam" id="PF14698">
    <property type="entry name" value="ASL_C2"/>
    <property type="match status" value="1"/>
</dbReference>
<dbReference type="Pfam" id="PF00206">
    <property type="entry name" value="Lyase_1"/>
    <property type="match status" value="1"/>
</dbReference>
<dbReference type="PRINTS" id="PR00145">
    <property type="entry name" value="ARGSUCLYASE"/>
</dbReference>
<dbReference type="PRINTS" id="PR00149">
    <property type="entry name" value="FUMRATELYASE"/>
</dbReference>
<dbReference type="SUPFAM" id="SSF48557">
    <property type="entry name" value="L-aspartase-like"/>
    <property type="match status" value="1"/>
</dbReference>
<dbReference type="PROSITE" id="PS00163">
    <property type="entry name" value="FUMARATE_LYASES"/>
    <property type="match status" value="1"/>
</dbReference>
<proteinExistence type="inferred from homology"/>
<comment type="catalytic activity">
    <reaction evidence="1">
        <text>2-(N(omega)-L-arginino)succinate = fumarate + L-arginine</text>
        <dbReference type="Rhea" id="RHEA:24020"/>
        <dbReference type="ChEBI" id="CHEBI:29806"/>
        <dbReference type="ChEBI" id="CHEBI:32682"/>
        <dbReference type="ChEBI" id="CHEBI:57472"/>
        <dbReference type="EC" id="4.3.2.1"/>
    </reaction>
</comment>
<comment type="pathway">
    <text evidence="1">Amino-acid biosynthesis; L-arginine biosynthesis; L-arginine from L-ornithine and carbamoyl phosphate: step 3/3.</text>
</comment>
<comment type="subcellular location">
    <subcellularLocation>
        <location evidence="1">Cytoplasm</location>
    </subcellularLocation>
</comment>
<comment type="similarity">
    <text evidence="1">Belongs to the lyase 1 family. Argininosuccinate lyase subfamily.</text>
</comment>
<feature type="chain" id="PRO_0000240742" description="Argininosuccinate lyase">
    <location>
        <begin position="1"/>
        <end position="465"/>
    </location>
</feature>